<accession>P97779</accession>
<evidence type="ECO:0000250" key="1">
    <source>
        <dbReference type="UniProtKB" id="O75330"/>
    </source>
</evidence>
<evidence type="ECO:0000250" key="2">
    <source>
        <dbReference type="UniProtKB" id="Q00547"/>
    </source>
</evidence>
<evidence type="ECO:0000255" key="3"/>
<organism>
    <name type="scientific">Rattus norvegicus</name>
    <name type="common">Rat</name>
    <dbReference type="NCBI Taxonomy" id="10116"/>
    <lineage>
        <taxon>Eukaryota</taxon>
        <taxon>Metazoa</taxon>
        <taxon>Chordata</taxon>
        <taxon>Craniata</taxon>
        <taxon>Vertebrata</taxon>
        <taxon>Euteleostomi</taxon>
        <taxon>Mammalia</taxon>
        <taxon>Eutheria</taxon>
        <taxon>Euarchontoglires</taxon>
        <taxon>Glires</taxon>
        <taxon>Rodentia</taxon>
        <taxon>Myomorpha</taxon>
        <taxon>Muroidea</taxon>
        <taxon>Muridae</taxon>
        <taxon>Murinae</taxon>
        <taxon>Rattus</taxon>
    </lineage>
</organism>
<sequence length="498" mass="57858">MGGGVSYVGWLEKSETEKLLEYIEEISCASDQVEKYKLDIAQLEEDLKEKDREILCLKQSLEEKVSFSKQIEDLTVKCQLLEAERDDLVSKDRERAESLSAEMQVLTEKLLLERQEYEKLQQNELQSQSLLQQEKELSAHLQQQLCSFQEEMTSERNVFKEQLKLALDELDAVQQKEEQSEKLVKQLEEETKSTAEQLRRLDDLLREKEIELEKRTAAHAQATVIAQEKYSDTAQTLRDVTAQLESYKSSTLKEIEDLKLENLTLQEKVAMAEKRVEDVQQQILTAESTNQEYAKVVQDLQNSSTLKEAEIKEITSSYLEKITDLQNQLRQQNEDFRKQLEEEGAKMTEKETAVTELTMEINKWRLLYEELYDKTKPFQQQLDAFEAEKQALLNEHGATQEQLSKIRDSYAQLLGHQNLKQKIKHVVKLKDENSQLKSEVSKLRSQLAKRKQNELRLQGELDKALGIRHFDPPKAFCHESKENVTLKTPLKEGNPNCC</sequence>
<name>HMMR_RAT</name>
<keyword id="KW-0963">Cytoplasm</keyword>
<keyword id="KW-0206">Cytoskeleton</keyword>
<keyword id="KW-0325">Glycoprotein</keyword>
<keyword id="KW-0373">Hyaluronic acid</keyword>
<keyword id="KW-0597">Phosphoprotein</keyword>
<keyword id="KW-1185">Reference proteome</keyword>
<keyword id="KW-0677">Repeat</keyword>
<comment type="function">
    <text evidence="2">Receptor for hyaluronic acid (HA) (By similarity). Involved in cell motility (By similarity). When hyaluronan binds to HMMR, the phosphorylation of a number of proteins, including the PTK2/FAK1 occurs. May also be involved in cellular transformation and metastasis formation, and in regulating extracellular-regulated kinase (ERK) activity (By similarity). May act as a regulator of adipogenisis (By similarity).</text>
</comment>
<comment type="subunit">
    <text evidence="1">Interacts with ANKRD26 (By similarity). Interacts with DYNLL1 (By similarity). Interacts with FAM83D/CHICA (By similarity).</text>
</comment>
<comment type="subcellular location">
    <subcellularLocation>
        <location evidence="2">Cell surface</location>
    </subcellularLocation>
    <subcellularLocation>
        <location evidence="2">Cytoplasm</location>
    </subcellularLocation>
    <subcellularLocation>
        <location evidence="2">Cytoplasm</location>
        <location evidence="2">Cytoskeleton</location>
        <location evidence="2">Spindle</location>
    </subcellularLocation>
</comment>
<dbReference type="EMBL" id="U87983">
    <property type="protein sequence ID" value="AAB47997.1"/>
    <property type="molecule type" value="mRNA"/>
</dbReference>
<dbReference type="SMR" id="P97779"/>
<dbReference type="FunCoup" id="P97779">
    <property type="interactions" value="384"/>
</dbReference>
<dbReference type="IntAct" id="P97779">
    <property type="interactions" value="1"/>
</dbReference>
<dbReference type="MINT" id="P97779"/>
<dbReference type="STRING" id="10116.ENSRNOP00000070444"/>
<dbReference type="GlyCosmos" id="P97779">
    <property type="glycosylation" value="3 sites, No reported glycans"/>
</dbReference>
<dbReference type="GlyGen" id="P97779">
    <property type="glycosylation" value="3 sites"/>
</dbReference>
<dbReference type="PhosphoSitePlus" id="P97779"/>
<dbReference type="UCSC" id="RGD:2805">
    <property type="organism name" value="rat"/>
</dbReference>
<dbReference type="AGR" id="RGD:2805"/>
<dbReference type="RGD" id="2805">
    <property type="gene designation" value="Hmmr"/>
</dbReference>
<dbReference type="InParanoid" id="P97779"/>
<dbReference type="PRO" id="PR:P97779"/>
<dbReference type="Proteomes" id="UP000002494">
    <property type="component" value="Unplaced"/>
</dbReference>
<dbReference type="GO" id="GO:0009986">
    <property type="term" value="C:cell surface"/>
    <property type="evidence" value="ECO:0007669"/>
    <property type="project" value="UniProtKB-SubCell"/>
</dbReference>
<dbReference type="GO" id="GO:0005737">
    <property type="term" value="C:cytoplasm"/>
    <property type="evidence" value="ECO:0000266"/>
    <property type="project" value="RGD"/>
</dbReference>
<dbReference type="GO" id="GO:0005819">
    <property type="term" value="C:spindle"/>
    <property type="evidence" value="ECO:0000250"/>
    <property type="project" value="UniProtKB"/>
</dbReference>
<dbReference type="GO" id="GO:0038024">
    <property type="term" value="F:cargo receptor activity"/>
    <property type="evidence" value="ECO:0000266"/>
    <property type="project" value="RGD"/>
</dbReference>
<dbReference type="GO" id="GO:0005540">
    <property type="term" value="F:hyaluronic acid binding"/>
    <property type="evidence" value="ECO:0000304"/>
    <property type="project" value="RGD"/>
</dbReference>
<dbReference type="GO" id="GO:0007267">
    <property type="term" value="P:cell-cell signaling"/>
    <property type="evidence" value="ECO:0000303"/>
    <property type="project" value="RGD"/>
</dbReference>
<dbReference type="GO" id="GO:0007010">
    <property type="term" value="P:cytoskeleton organization"/>
    <property type="evidence" value="ECO:0000303"/>
    <property type="project" value="RGD"/>
</dbReference>
<dbReference type="GO" id="GO:0030214">
    <property type="term" value="P:hyaluronan catabolic process"/>
    <property type="evidence" value="ECO:0000266"/>
    <property type="project" value="RGD"/>
</dbReference>
<dbReference type="GO" id="GO:0006898">
    <property type="term" value="P:receptor-mediated endocytosis"/>
    <property type="evidence" value="ECO:0000266"/>
    <property type="project" value="RGD"/>
</dbReference>
<dbReference type="InterPro" id="IPR031794">
    <property type="entry name" value="HMMR_C"/>
</dbReference>
<dbReference type="InterPro" id="IPR026203">
    <property type="entry name" value="IHABP"/>
</dbReference>
<dbReference type="PANTHER" id="PTHR18956">
    <property type="entry name" value="HYALURONAN MEDIATED MOTILITY RECEPTOR"/>
    <property type="match status" value="1"/>
</dbReference>
<dbReference type="PANTHER" id="PTHR18956:SF6">
    <property type="entry name" value="HYALURONAN MEDIATED MOTILITY RECEPTOR"/>
    <property type="match status" value="1"/>
</dbReference>
<dbReference type="Pfam" id="PF15908">
    <property type="entry name" value="HMMR_C"/>
    <property type="match status" value="1"/>
</dbReference>
<dbReference type="Pfam" id="PF15905">
    <property type="entry name" value="HMMR_N"/>
    <property type="match status" value="1"/>
</dbReference>
<feature type="chain" id="PRO_0000084009" description="Hyaluronan-mediated motility receptor">
    <location>
        <begin position="1"/>
        <end position="498"/>
    </location>
</feature>
<feature type="region of interest" description="Required for interaction with FAM83D" evidence="1">
    <location>
        <begin position="150"/>
        <end position="331"/>
    </location>
</feature>
<feature type="region of interest" description="Hyaluronic acid-binding" evidence="3">
    <location>
        <begin position="420"/>
        <end position="430"/>
    </location>
</feature>
<feature type="region of interest" description="Hyaluronic acid-binding" evidence="3">
    <location>
        <begin position="442"/>
        <end position="451"/>
    </location>
</feature>
<feature type="modified residue" description="Phosphothreonine" evidence="1">
    <location>
        <position position="488"/>
    </location>
</feature>
<feature type="glycosylation site" description="N-linked (GlcNAc...) asparagine" evidence="3">
    <location>
        <position position="262"/>
    </location>
</feature>
<feature type="glycosylation site" description="N-linked (GlcNAc...) asparagine" evidence="3">
    <location>
        <position position="302"/>
    </location>
</feature>
<feature type="glycosylation site" description="N-linked (GlcNAc...) asparagine" evidence="3">
    <location>
        <position position="483"/>
    </location>
</feature>
<reference key="1">
    <citation type="submission" date="1997-01" db="EMBL/GenBank/DDBJ databases">
        <authorList>
            <person name="Savani R.C."/>
            <person name="Hou G."/>
        </authorList>
    </citation>
    <scope>NUCLEOTIDE SEQUENCE [MRNA]</scope>
    <source>
        <tissue>Vascular smooth muscle</tissue>
    </source>
</reference>
<gene>
    <name type="primary">Hmmr</name>
    <name type="synonym">Ihabp</name>
    <name type="synonym">Rhamm</name>
</gene>
<protein>
    <recommendedName>
        <fullName>Hyaluronan-mediated motility receptor</fullName>
    </recommendedName>
    <alternativeName>
        <fullName>Intracellular hyaluronic acid-binding protein</fullName>
    </alternativeName>
    <alternativeName>
        <fullName>Receptor for hyaluronan-mediated motility</fullName>
    </alternativeName>
    <cdAntigenName>CD168</cdAntigenName>
</protein>
<proteinExistence type="evidence at transcript level"/>